<sequence length="198" mass="22608">MKQPIHTDPAKPDDFSTEDWRRLLTHLGENADRQGLRETPQRVEKAWKHWTSGYDQDPAEILKVFEDGAEQYNELIVVRGIPVYSHCEHHLAPFFGTATIGYTPNGKIVGLSKLTRLVDCFAKRLQVQERLTIQIADTLMEHVQPLSVGVVIRCRHMCMESRGIRTPGEETVTSALLGEMRTNLGLRNEFLMLAREKD</sequence>
<protein>
    <recommendedName>
        <fullName evidence="1">GTP cyclohydrolase 1</fullName>
        <ecNumber evidence="1">3.5.4.16</ecNumber>
    </recommendedName>
    <alternativeName>
        <fullName evidence="1">GTP cyclohydrolase I</fullName>
        <shortName evidence="1">GTP-CH-I</shortName>
    </alternativeName>
</protein>
<gene>
    <name evidence="1" type="primary">folE</name>
    <name type="ordered locus">mma_1859</name>
</gene>
<feature type="chain" id="PRO_1000190078" description="GTP cyclohydrolase 1">
    <location>
        <begin position="1"/>
        <end position="198"/>
    </location>
</feature>
<feature type="binding site" evidence="1">
    <location>
        <position position="87"/>
    </location>
    <ligand>
        <name>Zn(2+)</name>
        <dbReference type="ChEBI" id="CHEBI:29105"/>
    </ligand>
</feature>
<feature type="binding site" evidence="1">
    <location>
        <position position="90"/>
    </location>
    <ligand>
        <name>Zn(2+)</name>
        <dbReference type="ChEBI" id="CHEBI:29105"/>
    </ligand>
</feature>
<feature type="binding site" evidence="1">
    <location>
        <position position="158"/>
    </location>
    <ligand>
        <name>Zn(2+)</name>
        <dbReference type="ChEBI" id="CHEBI:29105"/>
    </ligand>
</feature>
<organism>
    <name type="scientific">Janthinobacterium sp. (strain Marseille)</name>
    <name type="common">Minibacterium massiliensis</name>
    <dbReference type="NCBI Taxonomy" id="375286"/>
    <lineage>
        <taxon>Bacteria</taxon>
        <taxon>Pseudomonadati</taxon>
        <taxon>Pseudomonadota</taxon>
        <taxon>Betaproteobacteria</taxon>
        <taxon>Burkholderiales</taxon>
        <taxon>Oxalobacteraceae</taxon>
        <taxon>Janthinobacterium</taxon>
    </lineage>
</organism>
<comment type="catalytic activity">
    <reaction evidence="1">
        <text>GTP + H2O = 7,8-dihydroneopterin 3'-triphosphate + formate + H(+)</text>
        <dbReference type="Rhea" id="RHEA:17473"/>
        <dbReference type="ChEBI" id="CHEBI:15377"/>
        <dbReference type="ChEBI" id="CHEBI:15378"/>
        <dbReference type="ChEBI" id="CHEBI:15740"/>
        <dbReference type="ChEBI" id="CHEBI:37565"/>
        <dbReference type="ChEBI" id="CHEBI:58462"/>
        <dbReference type="EC" id="3.5.4.16"/>
    </reaction>
</comment>
<comment type="pathway">
    <text evidence="1">Cofactor biosynthesis; 7,8-dihydroneopterin triphosphate biosynthesis; 7,8-dihydroneopterin triphosphate from GTP: step 1/1.</text>
</comment>
<comment type="subunit">
    <text evidence="1">Homomer.</text>
</comment>
<comment type="similarity">
    <text evidence="1">Belongs to the GTP cyclohydrolase I family.</text>
</comment>
<reference key="1">
    <citation type="journal article" date="2007" name="PLoS Genet.">
        <title>Genome analysis of Minibacterium massiliensis highlights the convergent evolution of water-living bacteria.</title>
        <authorList>
            <person name="Audic S."/>
            <person name="Robert C."/>
            <person name="Campagna B."/>
            <person name="Parinello H."/>
            <person name="Claverie J.-M."/>
            <person name="Raoult D."/>
            <person name="Drancourt M."/>
        </authorList>
    </citation>
    <scope>NUCLEOTIDE SEQUENCE [LARGE SCALE GENOMIC DNA]</scope>
    <source>
        <strain>Marseille</strain>
    </source>
</reference>
<proteinExistence type="inferred from homology"/>
<name>GCH1_JANMA</name>
<dbReference type="EC" id="3.5.4.16" evidence="1"/>
<dbReference type="EMBL" id="CP000269">
    <property type="protein sequence ID" value="ABR89239.1"/>
    <property type="molecule type" value="Genomic_DNA"/>
</dbReference>
<dbReference type="RefSeq" id="WP_012079712.1">
    <property type="nucleotide sequence ID" value="NC_009659.1"/>
</dbReference>
<dbReference type="SMR" id="A6SZ52"/>
<dbReference type="STRING" id="375286.mma_1859"/>
<dbReference type="KEGG" id="mms:mma_1859"/>
<dbReference type="eggNOG" id="COG0302">
    <property type="taxonomic scope" value="Bacteria"/>
</dbReference>
<dbReference type="HOGENOM" id="CLU_049768_3_1_4"/>
<dbReference type="OrthoDB" id="9801207at2"/>
<dbReference type="UniPathway" id="UPA00848">
    <property type="reaction ID" value="UER00151"/>
</dbReference>
<dbReference type="Proteomes" id="UP000006388">
    <property type="component" value="Chromosome"/>
</dbReference>
<dbReference type="GO" id="GO:0005737">
    <property type="term" value="C:cytoplasm"/>
    <property type="evidence" value="ECO:0007669"/>
    <property type="project" value="TreeGrafter"/>
</dbReference>
<dbReference type="GO" id="GO:0005525">
    <property type="term" value="F:GTP binding"/>
    <property type="evidence" value="ECO:0007669"/>
    <property type="project" value="TreeGrafter"/>
</dbReference>
<dbReference type="GO" id="GO:0003934">
    <property type="term" value="F:GTP cyclohydrolase I activity"/>
    <property type="evidence" value="ECO:0007669"/>
    <property type="project" value="UniProtKB-UniRule"/>
</dbReference>
<dbReference type="GO" id="GO:0008270">
    <property type="term" value="F:zinc ion binding"/>
    <property type="evidence" value="ECO:0007669"/>
    <property type="project" value="UniProtKB-UniRule"/>
</dbReference>
<dbReference type="GO" id="GO:0006730">
    <property type="term" value="P:one-carbon metabolic process"/>
    <property type="evidence" value="ECO:0007669"/>
    <property type="project" value="UniProtKB-UniRule"/>
</dbReference>
<dbReference type="GO" id="GO:0006729">
    <property type="term" value="P:tetrahydrobiopterin biosynthetic process"/>
    <property type="evidence" value="ECO:0007669"/>
    <property type="project" value="TreeGrafter"/>
</dbReference>
<dbReference type="GO" id="GO:0046654">
    <property type="term" value="P:tetrahydrofolate biosynthetic process"/>
    <property type="evidence" value="ECO:0007669"/>
    <property type="project" value="UniProtKB-UniRule"/>
</dbReference>
<dbReference type="FunFam" id="3.30.1130.10:FF:000001">
    <property type="entry name" value="GTP cyclohydrolase 1"/>
    <property type="match status" value="1"/>
</dbReference>
<dbReference type="Gene3D" id="1.10.286.10">
    <property type="match status" value="1"/>
</dbReference>
<dbReference type="Gene3D" id="3.30.1130.10">
    <property type="match status" value="1"/>
</dbReference>
<dbReference type="HAMAP" id="MF_00223">
    <property type="entry name" value="FolE"/>
    <property type="match status" value="1"/>
</dbReference>
<dbReference type="InterPro" id="IPR043133">
    <property type="entry name" value="GTP-CH-I_C/QueF"/>
</dbReference>
<dbReference type="InterPro" id="IPR043134">
    <property type="entry name" value="GTP-CH-I_N"/>
</dbReference>
<dbReference type="InterPro" id="IPR001474">
    <property type="entry name" value="GTP_CycHdrlase_I"/>
</dbReference>
<dbReference type="InterPro" id="IPR018234">
    <property type="entry name" value="GTP_CycHdrlase_I_CS"/>
</dbReference>
<dbReference type="InterPro" id="IPR020602">
    <property type="entry name" value="GTP_CycHdrlase_I_dom"/>
</dbReference>
<dbReference type="NCBIfam" id="TIGR00063">
    <property type="entry name" value="folE"/>
    <property type="match status" value="1"/>
</dbReference>
<dbReference type="NCBIfam" id="NF006825">
    <property type="entry name" value="PRK09347.1-2"/>
    <property type="match status" value="1"/>
</dbReference>
<dbReference type="NCBIfam" id="NF006826">
    <property type="entry name" value="PRK09347.1-3"/>
    <property type="match status" value="1"/>
</dbReference>
<dbReference type="PANTHER" id="PTHR11109:SF7">
    <property type="entry name" value="GTP CYCLOHYDROLASE 1"/>
    <property type="match status" value="1"/>
</dbReference>
<dbReference type="PANTHER" id="PTHR11109">
    <property type="entry name" value="GTP CYCLOHYDROLASE I"/>
    <property type="match status" value="1"/>
</dbReference>
<dbReference type="Pfam" id="PF01227">
    <property type="entry name" value="GTP_cyclohydroI"/>
    <property type="match status" value="1"/>
</dbReference>
<dbReference type="SUPFAM" id="SSF55620">
    <property type="entry name" value="Tetrahydrobiopterin biosynthesis enzymes-like"/>
    <property type="match status" value="1"/>
</dbReference>
<dbReference type="PROSITE" id="PS00859">
    <property type="entry name" value="GTP_CYCLOHYDROL_1_1"/>
    <property type="match status" value="1"/>
</dbReference>
<dbReference type="PROSITE" id="PS00860">
    <property type="entry name" value="GTP_CYCLOHYDROL_1_2"/>
    <property type="match status" value="1"/>
</dbReference>
<accession>A6SZ52</accession>
<evidence type="ECO:0000255" key="1">
    <source>
        <dbReference type="HAMAP-Rule" id="MF_00223"/>
    </source>
</evidence>
<keyword id="KW-0378">Hydrolase</keyword>
<keyword id="KW-0479">Metal-binding</keyword>
<keyword id="KW-0554">One-carbon metabolism</keyword>
<keyword id="KW-0862">Zinc</keyword>